<reference key="1">
    <citation type="journal article" date="2001" name="Biol. Chem.">
        <title>Structure of cruzipain/cruzain inhibitors isolated from Bauhinia bauhinioides seeds.</title>
        <authorList>
            <person name="de Oliveira C."/>
            <person name="Santana L.A."/>
            <person name="Carmona A.K."/>
            <person name="Cezari M.H."/>
            <person name="Sampaio M.U."/>
            <person name="Sampaio C.A.M."/>
            <person name="Oliva M.L.V."/>
        </authorList>
    </citation>
    <scope>PROTEIN SEQUENCE</scope>
    <scope>FUNCTION</scope>
    <source>
        <tissue>Seed</tissue>
    </source>
</reference>
<name>BBCI_BAUBA</name>
<keyword id="KW-0002">3D-structure</keyword>
<keyword id="KW-0903">Direct protein sequencing</keyword>
<keyword id="KW-0646">Protease inhibitor</keyword>
<keyword id="KW-0964">Secreted</keyword>
<keyword id="KW-0789">Thiol protease inhibitor</keyword>
<evidence type="ECO:0000269" key="1">
    <source>
    </source>
</evidence>
<evidence type="ECO:0000305" key="2"/>
<evidence type="ECO:0007829" key="3">
    <source>
        <dbReference type="PDB" id="2GZB"/>
    </source>
</evidence>
<feature type="chain" id="PRO_0000083294" description="Kunitz-type proteinase inhibitor BbCI">
    <location>
        <begin position="1"/>
        <end position="164"/>
    </location>
</feature>
<feature type="strand" evidence="3">
    <location>
        <begin position="12"/>
        <end position="14"/>
    </location>
</feature>
<feature type="strand" evidence="3">
    <location>
        <begin position="18"/>
        <end position="25"/>
    </location>
</feature>
<feature type="strand" evidence="3">
    <location>
        <begin position="28"/>
        <end position="33"/>
    </location>
</feature>
<feature type="strand" evidence="3">
    <location>
        <begin position="43"/>
        <end position="47"/>
    </location>
</feature>
<feature type="strand" evidence="3">
    <location>
        <begin position="50"/>
        <end position="52"/>
    </location>
</feature>
<feature type="strand" evidence="3">
    <location>
        <begin position="54"/>
        <end position="59"/>
    </location>
</feature>
<feature type="strand" evidence="3">
    <location>
        <begin position="61"/>
        <end position="63"/>
    </location>
</feature>
<feature type="strand" evidence="3">
    <location>
        <begin position="73"/>
        <end position="79"/>
    </location>
</feature>
<feature type="strand" evidence="3">
    <location>
        <begin position="86"/>
        <end position="92"/>
    </location>
</feature>
<feature type="turn" evidence="3">
    <location>
        <begin position="93"/>
        <end position="95"/>
    </location>
</feature>
<feature type="strand" evidence="3">
    <location>
        <begin position="96"/>
        <end position="103"/>
    </location>
</feature>
<feature type="strand" evidence="3">
    <location>
        <begin position="110"/>
        <end position="116"/>
    </location>
</feature>
<feature type="strand" evidence="3">
    <location>
        <begin position="119"/>
        <end position="124"/>
    </location>
</feature>
<feature type="strand" evidence="3">
    <location>
        <begin position="133"/>
        <end position="140"/>
    </location>
</feature>
<feature type="strand" evidence="3">
    <location>
        <begin position="143"/>
        <end position="151"/>
    </location>
</feature>
<feature type="strand" evidence="3">
    <location>
        <begin position="156"/>
        <end position="160"/>
    </location>
</feature>
<accession>P83051</accession>
<protein>
    <recommendedName>
        <fullName>Kunitz-type proteinase inhibitor BbCI</fullName>
    </recommendedName>
</protein>
<sequence>SVILDTKGEPVSNAADAYYLVPVSHGEGGLALAKVGNEAEPKAVVLDPHHRPGLTVRFETPLAIAIITESFFLNIKFVPSSSDSEVWDVSKQYPIGLAVKVTDTKSFVGPFRVEKEGEGYKIVYYPDRGQTGLDIGLVHRNDKYYLAATEGEPFVFKIRKATYE</sequence>
<dbReference type="PDB" id="2GZB">
    <property type="method" value="X-ray"/>
    <property type="resolution" value="1.70 A"/>
    <property type="chains" value="A/B=1-164"/>
</dbReference>
<dbReference type="PDBsum" id="2GZB"/>
<dbReference type="SMR" id="P83051"/>
<dbReference type="EvolutionaryTrace" id="P83051"/>
<dbReference type="GO" id="GO:0005576">
    <property type="term" value="C:extracellular region"/>
    <property type="evidence" value="ECO:0007669"/>
    <property type="project" value="UniProtKB-SubCell"/>
</dbReference>
<dbReference type="GO" id="GO:0004869">
    <property type="term" value="F:cysteine-type endopeptidase inhibitor activity"/>
    <property type="evidence" value="ECO:0007669"/>
    <property type="project" value="UniProtKB-KW"/>
</dbReference>
<dbReference type="CDD" id="cd23364">
    <property type="entry name" value="beta-trefoil_STI_BbKI-like"/>
    <property type="match status" value="1"/>
</dbReference>
<dbReference type="Gene3D" id="2.80.10.50">
    <property type="match status" value="1"/>
</dbReference>
<dbReference type="InterPro" id="IPR011065">
    <property type="entry name" value="Kunitz_inhibitor_STI-like_sf"/>
</dbReference>
<dbReference type="InterPro" id="IPR002160">
    <property type="entry name" value="Prot_inh_Kunz-lg"/>
</dbReference>
<dbReference type="PANTHER" id="PTHR33107">
    <property type="entry name" value="KUNITZ TRYPSIN INHIBITOR 2"/>
    <property type="match status" value="1"/>
</dbReference>
<dbReference type="PANTHER" id="PTHR33107:SF5">
    <property type="entry name" value="KUNITZ TRYPSIN INHIBITOR 5"/>
    <property type="match status" value="1"/>
</dbReference>
<dbReference type="Pfam" id="PF00197">
    <property type="entry name" value="Kunitz_legume"/>
    <property type="match status" value="1"/>
</dbReference>
<dbReference type="SMART" id="SM00452">
    <property type="entry name" value="STI"/>
    <property type="match status" value="1"/>
</dbReference>
<dbReference type="SUPFAM" id="SSF50386">
    <property type="entry name" value="STI-like"/>
    <property type="match status" value="1"/>
</dbReference>
<organism evidence="2">
    <name type="scientific">Bauhinia bauhinioides</name>
    <name type="common">Perlebia bauhinoides</name>
    <dbReference type="NCBI Taxonomy" id="166014"/>
    <lineage>
        <taxon>Eukaryota</taxon>
        <taxon>Viridiplantae</taxon>
        <taxon>Streptophyta</taxon>
        <taxon>Embryophyta</taxon>
        <taxon>Tracheophyta</taxon>
        <taxon>Spermatophyta</taxon>
        <taxon>Magnoliopsida</taxon>
        <taxon>eudicotyledons</taxon>
        <taxon>Gunneridae</taxon>
        <taxon>Pentapetalae</taxon>
        <taxon>rosids</taxon>
        <taxon>fabids</taxon>
        <taxon>Fabales</taxon>
        <taxon>Fabaceae</taxon>
        <taxon>Cercidoideae</taxon>
        <taxon>Cercideae</taxon>
        <taxon>Bauhiniinae</taxon>
        <taxon>Bauhinia</taxon>
    </lineage>
</organism>
<comment type="function">
    <text evidence="1">Inhibits T.cruzi cruzipain.</text>
</comment>
<comment type="subcellular location">
    <subcellularLocation>
        <location>Secreted</location>
    </subcellularLocation>
</comment>
<comment type="similarity">
    <text evidence="2">Belongs to the protease inhibitor I3 (leguminous Kunitz-type inhibitor) family.</text>
</comment>
<proteinExistence type="evidence at protein level"/>